<name>KCNKI_RAT</name>
<feature type="chain" id="PRO_0000312502" description="Potassium channel subfamily K member 18">
    <location>
        <begin position="1"/>
        <end position="405"/>
    </location>
</feature>
<feature type="transmembrane region" description="Helical" evidence="5">
    <location>
        <begin position="43"/>
        <end position="63"/>
    </location>
</feature>
<feature type="intramembrane region" description="Pore-forming; Name=Pore-forming 1" evidence="5">
    <location>
        <begin position="125"/>
        <end position="151"/>
    </location>
</feature>
<feature type="transmembrane region" description="Helical" evidence="5">
    <location>
        <begin position="153"/>
        <end position="173"/>
    </location>
</feature>
<feature type="transmembrane region" description="Helical" evidence="5">
    <location>
        <begin position="304"/>
        <end position="324"/>
    </location>
</feature>
<feature type="intramembrane region" description="Pore-forming; Name=Pore-forming 2" evidence="5">
    <location>
        <begin position="337"/>
        <end position="351"/>
    </location>
</feature>
<feature type="transmembrane region" description="Helical" evidence="5">
    <location>
        <begin position="358"/>
        <end position="378"/>
    </location>
</feature>
<feature type="region of interest" description="Selectivity filter 1" evidence="2">
    <location>
        <begin position="138"/>
        <end position="143"/>
    </location>
</feature>
<feature type="region of interest" description="Interaction with calcineurin" evidence="3">
    <location>
        <begin position="221"/>
        <end position="226"/>
    </location>
</feature>
<feature type="region of interest" description="Interaction with YWHAH" evidence="3">
    <location>
        <begin position="272"/>
        <end position="277"/>
    </location>
</feature>
<feature type="region of interest" description="Selectivity filter 2" evidence="4">
    <location>
        <begin position="346"/>
        <end position="351"/>
    </location>
</feature>
<feature type="binding site" evidence="2">
    <location>
        <position position="138"/>
    </location>
    <ligand>
        <name>K(+)</name>
        <dbReference type="ChEBI" id="CHEBI:29103"/>
        <label>1</label>
    </ligand>
</feature>
<feature type="binding site" evidence="2">
    <location>
        <position position="138"/>
    </location>
    <ligand>
        <name>K(+)</name>
        <dbReference type="ChEBI" id="CHEBI:29103"/>
        <label>4</label>
    </ligand>
</feature>
<feature type="binding site" evidence="2">
    <location>
        <position position="139"/>
    </location>
    <ligand>
        <name>K(+)</name>
        <dbReference type="ChEBI" id="CHEBI:29103"/>
        <label>1</label>
    </ligand>
</feature>
<feature type="binding site" evidence="2">
    <location>
        <position position="139"/>
    </location>
    <ligand>
        <name>K(+)</name>
        <dbReference type="ChEBI" id="CHEBI:29103"/>
        <label>2</label>
    </ligand>
</feature>
<feature type="binding site" evidence="2">
    <location>
        <position position="140"/>
    </location>
    <ligand>
        <name>K(+)</name>
        <dbReference type="ChEBI" id="CHEBI:29103"/>
        <label>2</label>
    </ligand>
</feature>
<feature type="binding site" evidence="2">
    <location>
        <position position="140"/>
    </location>
    <ligand>
        <name>K(+)</name>
        <dbReference type="ChEBI" id="CHEBI:29103"/>
        <label>3</label>
    </ligand>
</feature>
<feature type="binding site" evidence="2">
    <location>
        <position position="141"/>
    </location>
    <ligand>
        <name>K(+)</name>
        <dbReference type="ChEBI" id="CHEBI:29103"/>
        <label>3</label>
    </ligand>
</feature>
<feature type="modified residue" description="Phosphoserine" evidence="3">
    <location>
        <position position="275"/>
    </location>
</feature>
<feature type="modified residue" description="Phosphoserine" evidence="3">
    <location>
        <position position="287"/>
    </location>
</feature>
<feature type="glycosylation site" description="N-linked (GlcNAc...) asparagine" evidence="5">
    <location>
        <position position="94"/>
    </location>
</feature>
<feature type="disulfide bond" description="Interchain (with C-88)" evidence="2">
    <location>
        <position position="88"/>
    </location>
</feature>
<proteinExistence type="evidence at transcript level"/>
<accession>Q6Q1P3</accession>
<protein>
    <recommendedName>
        <fullName>Potassium channel subfamily K member 18</fullName>
    </recommendedName>
    <alternativeName>
        <fullName>Tresk-2</fullName>
    </alternativeName>
    <alternativeName>
        <fullName>Two-pore-domain potassium channel TRESK</fullName>
    </alternativeName>
</protein>
<reference key="1">
    <citation type="journal article" date="2005" name="Anesth. Analg.">
        <title>Species-specific differences in response to anesthetics and other modulators by the K2P channel TRESK.</title>
        <authorList>
            <person name="Keshavaprasad B."/>
            <person name="Liu C."/>
            <person name="Au J.D."/>
            <person name="Kindler C.H."/>
            <person name="Cotten J.F."/>
            <person name="Yost C.S."/>
        </authorList>
    </citation>
    <scope>NUCLEOTIDE SEQUENCE [MRNA]</scope>
    <scope>FUNCTION</scope>
    <scope>TRANSPORTER ACTIVITY</scope>
    <scope>ACTIVITY REGULATION</scope>
    <source>
        <strain>Sprague-Dawley</strain>
        <tissue>Spinal cord</tissue>
    </source>
</reference>
<keyword id="KW-1003">Cell membrane</keyword>
<keyword id="KW-1015">Disulfide bond</keyword>
<keyword id="KW-0325">Glycoprotein</keyword>
<keyword id="KW-0407">Ion channel</keyword>
<keyword id="KW-0406">Ion transport</keyword>
<keyword id="KW-0472">Membrane</keyword>
<keyword id="KW-0479">Metal-binding</keyword>
<keyword id="KW-0597">Phosphoprotein</keyword>
<keyword id="KW-0630">Potassium</keyword>
<keyword id="KW-0631">Potassium channel</keyword>
<keyword id="KW-0633">Potassium transport</keyword>
<keyword id="KW-1185">Reference proteome</keyword>
<keyword id="KW-0812">Transmembrane</keyword>
<keyword id="KW-1133">Transmembrane helix</keyword>
<keyword id="KW-0813">Transport</keyword>
<sequence length="405" mass="45351">MEAEEPPEARRRCPEALGKASGCCPEAPGKARGCCPEALGKLLPGLCFLCCLVTYALVGAALFSAVEGRPDPEAEENPELKKFLDKLCNILKCNLTVVEGSRKDLCEHLQQLKPQWFKAPEDWSFLSALFFCCTVFSTVGYGHMYPVTRLGKFLCMLYALFGIPLMFLVLTDIGDILAAILSRAYSRFQALLCLPRDISKWRPLLLCRKQTDSKPADEAIPQIVIDAGADELLDPQPSREPASPSCNVELFERLVAREKQNELQPPMRPVERSNSCPELVLGRLSCSILSNLDEVGQQVERLDIPLPVIALVIFAYISCAAAILPFWETDLGFEDAFYFCFVTLTTIGFGDIVLVHPHFFLFFSIYIIVGMEILFIAFKLMQNRLLHTYKTLMLFVCQREVSLPC</sequence>
<gene>
    <name type="primary">Kcnk18</name>
    <name type="synonym">Tresk-2</name>
    <name type="synonym">Tresk2</name>
</gene>
<evidence type="ECO:0000250" key="1"/>
<evidence type="ECO:0000250" key="2">
    <source>
        <dbReference type="UniProtKB" id="P57789"/>
    </source>
</evidence>
<evidence type="ECO:0000250" key="3">
    <source>
        <dbReference type="UniProtKB" id="Q6VV64"/>
    </source>
</evidence>
<evidence type="ECO:0000250" key="4">
    <source>
        <dbReference type="UniProtKB" id="Q7Z418"/>
    </source>
</evidence>
<evidence type="ECO:0000255" key="5"/>
<evidence type="ECO:0000269" key="6">
    <source>
    </source>
</evidence>
<evidence type="ECO:0000305" key="7"/>
<comment type="function">
    <text evidence="3 6">K(+) channel that conducts outward and inward rectifying currents at depolarized and hyperpolarized membrane potentials, respectively. The outward rectifying currents are voltage-dependent, coupled to K(+) electrochemical gradient across the membrane, whereas the inward currents can be induced in response to activation of Ca(2+)-mobilizing receptors (PubMed:16192517). Homo- and heterodimerizes to form functional channels with distinct regulatory and gating properties (By similarity). In trigeminal ganglia sensory neurons, the heterodimers of KCNK18/TRESK and KCNK2/TREK-1 or KCNK10/TREK-2 inhibit neuronal firing and neurogenic inflammation by stabilizing the resting membrane potential at K(+) equilibrium potential as well as by regulating the threshold of action potentials and the spike frequency (By similarity). In thymocytes, conducts K(+) currents upon T cell receptor (TCR) signaling leading to sustained Ca(2+) influx and NF-kappa-B activation, FOXP3 transcription and positive selection of regulatory T cell (Treg) progenitor subsets (By similarity). Appears to mediate the analgesics effects of hydroxy-alpha-sanshool, a metabolite naturally present in Schezuan pepper and other Xanthoxylum plants (By similarity).</text>
</comment>
<comment type="catalytic activity">
    <reaction evidence="6">
        <text>K(+)(in) = K(+)(out)</text>
        <dbReference type="Rhea" id="RHEA:29463"/>
        <dbReference type="ChEBI" id="CHEBI:29103"/>
    </reaction>
</comment>
<comment type="activity regulation">
    <text evidence="6">Activated by volatile anesthetics, such as isoflurane and inhibited by local anesthetics such as bupivacaine and lidocaine. Inhibited by extracellular acidic pH (PubMed:16192517). Inhibited by Zn(2+) ions (PubMed:16192517).</text>
</comment>
<comment type="subunit">
    <text evidence="3">Homodimer. Heterodimer with KCNK2. Heterodimer with KCNK10. Interacts with calcineurin. Interacts with YWHAH, in a phosphorylation-dependent manner.</text>
</comment>
<comment type="subcellular location">
    <subcellularLocation>
        <location evidence="1">Cell membrane</location>
        <topology evidence="1">Multi-pass membrane protein</topology>
    </subcellularLocation>
</comment>
<comment type="domain">
    <text evidence="4">Each subunit contributes two pore-forming domains 1 and 2 which assemble to form a single pore with M2 and M4 transmembrane helices lining the central cavity and M1 and M3 facing the lipid bilayer. The transmembrane helices are bridged by the selectivity filters 1 and 2 carrying a signature sequence TxTTxGYGD that coordinate the permeant ions. Up to four ions can simultaneously occupy the selectivity filter and at least two elementary charges must translocate across the filter to convert it into the open conformation.</text>
</comment>
<comment type="PTM">
    <text evidence="3">Phosphorylation of Ser-275 is required for the binding of 14-3-3eta/YWHAH. Calcineurin-mediated dephosphorylation of Ser-287 enhances channel activity.</text>
</comment>
<comment type="PTM">
    <text evidence="3">N-glycosylated.</text>
</comment>
<comment type="similarity">
    <text evidence="7">Belongs to the two pore domain potassium channel (TC 1.A.1.8) family.</text>
</comment>
<dbReference type="EMBL" id="AY567970">
    <property type="protein sequence ID" value="AAS68516.1"/>
    <property type="molecule type" value="mRNA"/>
</dbReference>
<dbReference type="RefSeq" id="NP_001003820.1">
    <property type="nucleotide sequence ID" value="NM_001003820.2"/>
</dbReference>
<dbReference type="FunCoup" id="Q6Q1P3">
    <property type="interactions" value="4"/>
</dbReference>
<dbReference type="STRING" id="10116.ENSRNOP00000039866"/>
<dbReference type="GlyCosmos" id="Q6Q1P3">
    <property type="glycosylation" value="1 site, No reported glycans"/>
</dbReference>
<dbReference type="GlyGen" id="Q6Q1P3">
    <property type="glycosylation" value="1 site"/>
</dbReference>
<dbReference type="PhosphoSitePlus" id="Q6Q1P3"/>
<dbReference type="PaxDb" id="10116-ENSRNOP00000039866"/>
<dbReference type="ABCD" id="Q6Q1P3">
    <property type="antibodies" value="1 sequenced antibody"/>
</dbReference>
<dbReference type="Ensembl" id="ENSRNOT00000042977.5">
    <property type="protein sequence ID" value="ENSRNOP00000039866.2"/>
    <property type="gene ID" value="ENSRNOG00000032706.6"/>
</dbReference>
<dbReference type="GeneID" id="445371"/>
<dbReference type="KEGG" id="rno:445371"/>
<dbReference type="AGR" id="RGD:1303091"/>
<dbReference type="CTD" id="338567"/>
<dbReference type="RGD" id="1303091">
    <property type="gene designation" value="Kcnk18"/>
</dbReference>
<dbReference type="eggNOG" id="KOG1418">
    <property type="taxonomic scope" value="Eukaryota"/>
</dbReference>
<dbReference type="GeneTree" id="ENSGT00700000104522"/>
<dbReference type="InParanoid" id="Q6Q1P3"/>
<dbReference type="OMA" id="FWAVFPH"/>
<dbReference type="OrthoDB" id="297496at2759"/>
<dbReference type="PhylomeDB" id="Q6Q1P3"/>
<dbReference type="TreeFam" id="TF316115"/>
<dbReference type="Reactome" id="R-RNO-1299344">
    <property type="pathway name" value="TWIK-related spinal cord K+ channel (TRESK)"/>
</dbReference>
<dbReference type="Reactome" id="R-RNO-5576886">
    <property type="pathway name" value="Phase 4 - resting membrane potential"/>
</dbReference>
<dbReference type="PRO" id="PR:Q6Q1P3"/>
<dbReference type="Proteomes" id="UP000002494">
    <property type="component" value="Chromosome 1"/>
</dbReference>
<dbReference type="ExpressionAtlas" id="Q6Q1P3">
    <property type="expression patterns" value="baseline"/>
</dbReference>
<dbReference type="GO" id="GO:0005886">
    <property type="term" value="C:plasma membrane"/>
    <property type="evidence" value="ECO:0000250"/>
    <property type="project" value="UniProtKB"/>
</dbReference>
<dbReference type="GO" id="GO:0015269">
    <property type="term" value="F:calcium-activated potassium channel activity"/>
    <property type="evidence" value="ECO:0000266"/>
    <property type="project" value="RGD"/>
</dbReference>
<dbReference type="GO" id="GO:0046872">
    <property type="term" value="F:metal ion binding"/>
    <property type="evidence" value="ECO:0007669"/>
    <property type="project" value="UniProtKB-KW"/>
</dbReference>
<dbReference type="GO" id="GO:0015271">
    <property type="term" value="F:outward rectifier potassium channel activity"/>
    <property type="evidence" value="ECO:0000266"/>
    <property type="project" value="RGD"/>
</dbReference>
<dbReference type="GO" id="GO:0022841">
    <property type="term" value="F:potassium ion leak channel activity"/>
    <property type="evidence" value="ECO:0000318"/>
    <property type="project" value="GO_Central"/>
</dbReference>
<dbReference type="GO" id="GO:0071467">
    <property type="term" value="P:cellular response to pH"/>
    <property type="evidence" value="ECO:0000266"/>
    <property type="project" value="RGD"/>
</dbReference>
<dbReference type="GO" id="GO:0097623">
    <property type="term" value="P:potassium ion export across plasma membrane"/>
    <property type="evidence" value="ECO:0000266"/>
    <property type="project" value="RGD"/>
</dbReference>
<dbReference type="GO" id="GO:0071805">
    <property type="term" value="P:potassium ion transmembrane transport"/>
    <property type="evidence" value="ECO:0000318"/>
    <property type="project" value="GO_Central"/>
</dbReference>
<dbReference type="GO" id="GO:0006813">
    <property type="term" value="P:potassium ion transport"/>
    <property type="evidence" value="ECO:0000250"/>
    <property type="project" value="UniProtKB"/>
</dbReference>
<dbReference type="GO" id="GO:0032829">
    <property type="term" value="P:regulation of CD4-positive, CD25-positive, alpha-beta regulatory T cell differentiation"/>
    <property type="evidence" value="ECO:0000250"/>
    <property type="project" value="UniProtKB"/>
</dbReference>
<dbReference type="Gene3D" id="1.10.287.70">
    <property type="match status" value="1"/>
</dbReference>
<dbReference type="InterPro" id="IPR003280">
    <property type="entry name" value="2pore_dom_K_chnl"/>
</dbReference>
<dbReference type="InterPro" id="IPR003092">
    <property type="entry name" value="2pore_dom_K_chnl_TASK"/>
</dbReference>
<dbReference type="InterPro" id="IPR013099">
    <property type="entry name" value="K_chnl_dom"/>
</dbReference>
<dbReference type="PANTHER" id="PTHR11003:SF346">
    <property type="entry name" value="POTASSIUM CHANNEL SUBFAMILY K MEMBER 18"/>
    <property type="match status" value="1"/>
</dbReference>
<dbReference type="PANTHER" id="PTHR11003">
    <property type="entry name" value="POTASSIUM CHANNEL, SUBFAMILY K"/>
    <property type="match status" value="1"/>
</dbReference>
<dbReference type="Pfam" id="PF07885">
    <property type="entry name" value="Ion_trans_2"/>
    <property type="match status" value="2"/>
</dbReference>
<dbReference type="PRINTS" id="PR01333">
    <property type="entry name" value="2POREKCHANEL"/>
</dbReference>
<dbReference type="PRINTS" id="PR01095">
    <property type="entry name" value="TASKCHANNEL"/>
</dbReference>
<dbReference type="SUPFAM" id="SSF81324">
    <property type="entry name" value="Voltage-gated potassium channels"/>
    <property type="match status" value="2"/>
</dbReference>
<organism>
    <name type="scientific">Rattus norvegicus</name>
    <name type="common">Rat</name>
    <dbReference type="NCBI Taxonomy" id="10116"/>
    <lineage>
        <taxon>Eukaryota</taxon>
        <taxon>Metazoa</taxon>
        <taxon>Chordata</taxon>
        <taxon>Craniata</taxon>
        <taxon>Vertebrata</taxon>
        <taxon>Euteleostomi</taxon>
        <taxon>Mammalia</taxon>
        <taxon>Eutheria</taxon>
        <taxon>Euarchontoglires</taxon>
        <taxon>Glires</taxon>
        <taxon>Rodentia</taxon>
        <taxon>Myomorpha</taxon>
        <taxon>Muroidea</taxon>
        <taxon>Muridae</taxon>
        <taxon>Murinae</taxon>
        <taxon>Rattus</taxon>
    </lineage>
</organism>